<keyword id="KW-0007">Acetylation</keyword>
<keyword id="KW-0113">Calvin cycle</keyword>
<keyword id="KW-0120">Carbon dioxide fixation</keyword>
<keyword id="KW-0150">Chloroplast</keyword>
<keyword id="KW-1015">Disulfide bond</keyword>
<keyword id="KW-0456">Lyase</keyword>
<keyword id="KW-0460">Magnesium</keyword>
<keyword id="KW-0479">Metal-binding</keyword>
<keyword id="KW-0488">Methylation</keyword>
<keyword id="KW-0503">Monooxygenase</keyword>
<keyword id="KW-0560">Oxidoreductase</keyword>
<keyword id="KW-0601">Photorespiration</keyword>
<keyword id="KW-0602">Photosynthesis</keyword>
<keyword id="KW-0934">Plastid</keyword>
<feature type="propeptide" id="PRO_0000031371" evidence="1">
    <location>
        <begin position="1"/>
        <end position="2"/>
    </location>
</feature>
<feature type="chain" id="PRO_0000031372" description="Ribulose bisphosphate carboxylase large chain">
    <location>
        <begin position="3"/>
        <end position="475"/>
    </location>
</feature>
<feature type="active site" description="Proton acceptor" evidence="1">
    <location>
        <position position="175"/>
    </location>
</feature>
<feature type="active site" description="Proton acceptor" evidence="1">
    <location>
        <position position="294"/>
    </location>
</feature>
<feature type="binding site" description="in homodimeric partner" evidence="1">
    <location>
        <position position="123"/>
    </location>
    <ligand>
        <name>substrate</name>
    </ligand>
</feature>
<feature type="binding site" evidence="1">
    <location>
        <position position="173"/>
    </location>
    <ligand>
        <name>substrate</name>
    </ligand>
</feature>
<feature type="binding site" evidence="1">
    <location>
        <position position="177"/>
    </location>
    <ligand>
        <name>substrate</name>
    </ligand>
</feature>
<feature type="binding site" description="via carbamate group" evidence="1">
    <location>
        <position position="201"/>
    </location>
    <ligand>
        <name>Mg(2+)</name>
        <dbReference type="ChEBI" id="CHEBI:18420"/>
    </ligand>
</feature>
<feature type="binding site" evidence="1">
    <location>
        <position position="203"/>
    </location>
    <ligand>
        <name>Mg(2+)</name>
        <dbReference type="ChEBI" id="CHEBI:18420"/>
    </ligand>
</feature>
<feature type="binding site" evidence="1">
    <location>
        <position position="204"/>
    </location>
    <ligand>
        <name>Mg(2+)</name>
        <dbReference type="ChEBI" id="CHEBI:18420"/>
    </ligand>
</feature>
<feature type="binding site" evidence="1">
    <location>
        <position position="295"/>
    </location>
    <ligand>
        <name>substrate</name>
    </ligand>
</feature>
<feature type="binding site" evidence="1">
    <location>
        <position position="327"/>
    </location>
    <ligand>
        <name>substrate</name>
    </ligand>
</feature>
<feature type="binding site" evidence="1">
    <location>
        <position position="379"/>
    </location>
    <ligand>
        <name>substrate</name>
    </ligand>
</feature>
<feature type="site" description="Transition state stabilizer" evidence="1">
    <location>
        <position position="334"/>
    </location>
</feature>
<feature type="modified residue" description="N-acetylproline" evidence="1">
    <location>
        <position position="3"/>
    </location>
</feature>
<feature type="modified residue" description="N6,N6,N6-trimethyllysine" evidence="1">
    <location>
        <position position="14"/>
    </location>
</feature>
<feature type="modified residue" description="N6-carboxylysine" evidence="1">
    <location>
        <position position="201"/>
    </location>
</feature>
<feature type="disulfide bond" description="Interchain; in linked form" evidence="1">
    <location>
        <position position="247"/>
    </location>
</feature>
<geneLocation type="chloroplast"/>
<protein>
    <recommendedName>
        <fullName evidence="1">Ribulose bisphosphate carboxylase large chain</fullName>
        <shortName evidence="1">RuBisCO large subunit</shortName>
        <ecNumber evidence="1">4.1.1.39</ecNumber>
    </recommendedName>
</protein>
<reference key="1">
    <citation type="journal article" date="1992" name="Syst. Bot.">
        <title>Evolutionary relationships of the Caryophyllidae based on comparative rbcL sequences.</title>
        <authorList>
            <person name="Giannasi D.E."/>
            <person name="Zurawski G."/>
            <person name="Learn G.H."/>
            <person name="Clegg M.T."/>
        </authorList>
        <dbReference type="AGRICOLA" id="IND92012379"/>
    </citation>
    <scope>NUCLEOTIDE SEQUENCE [GENOMIC DNA]</scope>
</reference>
<evidence type="ECO:0000255" key="1">
    <source>
        <dbReference type="HAMAP-Rule" id="MF_01338"/>
    </source>
</evidence>
<proteinExistence type="inferred from homology"/>
<organism>
    <name type="scientific">Plumbago auriculata</name>
    <name type="common">Cape leadwort</name>
    <dbReference type="NCBI Taxonomy" id="45172"/>
    <lineage>
        <taxon>Eukaryota</taxon>
        <taxon>Viridiplantae</taxon>
        <taxon>Streptophyta</taxon>
        <taxon>Embryophyta</taxon>
        <taxon>Tracheophyta</taxon>
        <taxon>Spermatophyta</taxon>
        <taxon>Magnoliopsida</taxon>
        <taxon>eudicotyledons</taxon>
        <taxon>Gunneridae</taxon>
        <taxon>Pentapetalae</taxon>
        <taxon>Caryophyllales</taxon>
        <taxon>Plumbaginaceae</taxon>
        <taxon>Plumbago</taxon>
    </lineage>
</organism>
<accession>Q43036</accession>
<gene>
    <name evidence="1" type="primary">rbcL</name>
</gene>
<sequence>MSPQTETKAGVGFKAGVKEYKLTYYTPDYEPHDHDILAAFRVTPQPGGPPEEAGAAVAAESSTGTWTPVWTDGLTWFDRYKGRSYHIDAVPGGENPFIAYVAYPLDLFEEGSVANMFSSIVGNVFGFKALRALRLEDLRIPPAYTKTFQGPPHGIQVERDKLNKYGRPLLGCTIKPKLGLSAKNYGRAVYECLRGGLDFTKDDENVNSQPFMRWRDRFLFCAEALFKAQSETVEIKGHYSNATAGTCEEMIKRAVFADELGVPIVMHDYLTGGFTANTSLAHYCRDNGLLLHIHRAMHAVIDRQKNHGIHFRVLAKALRLSGGDHIHSGTVVGKLEGERDITLGFVDLLRDDFVEKDRSRGIYFTQPWVSLPGVIPVASGGIHVWHMPALTEIFGDDSVLQFGGGTLGTPWGNAPGAVANRVALEACVQARNEGRDLAREGNEIIRQAAKWSPELAAACEVWKEIEFEYEAVDTL</sequence>
<comment type="function">
    <text evidence="1">RuBisCO catalyzes two reactions: the carboxylation of D-ribulose 1,5-bisphosphate, the primary event in carbon dioxide fixation, as well as the oxidative fragmentation of the pentose substrate in the photorespiration process. Both reactions occur simultaneously and in competition at the same active site.</text>
</comment>
<comment type="catalytic activity">
    <reaction evidence="1">
        <text>2 (2R)-3-phosphoglycerate + 2 H(+) = D-ribulose 1,5-bisphosphate + CO2 + H2O</text>
        <dbReference type="Rhea" id="RHEA:23124"/>
        <dbReference type="ChEBI" id="CHEBI:15377"/>
        <dbReference type="ChEBI" id="CHEBI:15378"/>
        <dbReference type="ChEBI" id="CHEBI:16526"/>
        <dbReference type="ChEBI" id="CHEBI:57870"/>
        <dbReference type="ChEBI" id="CHEBI:58272"/>
        <dbReference type="EC" id="4.1.1.39"/>
    </reaction>
</comment>
<comment type="catalytic activity">
    <reaction evidence="1">
        <text>D-ribulose 1,5-bisphosphate + O2 = 2-phosphoglycolate + (2R)-3-phosphoglycerate + 2 H(+)</text>
        <dbReference type="Rhea" id="RHEA:36631"/>
        <dbReference type="ChEBI" id="CHEBI:15378"/>
        <dbReference type="ChEBI" id="CHEBI:15379"/>
        <dbReference type="ChEBI" id="CHEBI:57870"/>
        <dbReference type="ChEBI" id="CHEBI:58033"/>
        <dbReference type="ChEBI" id="CHEBI:58272"/>
    </reaction>
</comment>
<comment type="cofactor">
    <cofactor evidence="1">
        <name>Mg(2+)</name>
        <dbReference type="ChEBI" id="CHEBI:18420"/>
    </cofactor>
    <text evidence="1">Binds 1 Mg(2+) ion per subunit.</text>
</comment>
<comment type="subunit">
    <text evidence="1">Heterohexadecamer of 8 large chains and 8 small chains; disulfide-linked. The disulfide link is formed within the large subunit homodimers.</text>
</comment>
<comment type="subcellular location">
    <subcellularLocation>
        <location>Plastid</location>
        <location>Chloroplast</location>
    </subcellularLocation>
</comment>
<comment type="PTM">
    <text evidence="1">The disulfide bond which can form in the large chain dimeric partners within the hexadecamer appears to be associated with oxidative stress and protein turnover.</text>
</comment>
<comment type="miscellaneous">
    <text evidence="1">The basic functional RuBisCO is composed of a large chain homodimer in a 'head-to-tail' conformation. In form I RuBisCO this homodimer is arranged in a barrel-like tetramer with the small subunits forming a tetrameric 'cap' on each end of the 'barrel'.</text>
</comment>
<comment type="similarity">
    <text evidence="1">Belongs to the RuBisCO large chain family. Type I subfamily.</text>
</comment>
<dbReference type="EC" id="4.1.1.39" evidence="1"/>
<dbReference type="EMBL" id="M77701">
    <property type="protein sequence ID" value="AAA33781.1"/>
    <property type="molecule type" value="Genomic_DNA"/>
</dbReference>
<dbReference type="SMR" id="Q43036"/>
<dbReference type="GO" id="GO:0009507">
    <property type="term" value="C:chloroplast"/>
    <property type="evidence" value="ECO:0007669"/>
    <property type="project" value="UniProtKB-SubCell"/>
</dbReference>
<dbReference type="GO" id="GO:0000287">
    <property type="term" value="F:magnesium ion binding"/>
    <property type="evidence" value="ECO:0007669"/>
    <property type="project" value="UniProtKB-UniRule"/>
</dbReference>
<dbReference type="GO" id="GO:0004497">
    <property type="term" value="F:monooxygenase activity"/>
    <property type="evidence" value="ECO:0007669"/>
    <property type="project" value="UniProtKB-KW"/>
</dbReference>
<dbReference type="GO" id="GO:0016984">
    <property type="term" value="F:ribulose-bisphosphate carboxylase activity"/>
    <property type="evidence" value="ECO:0007669"/>
    <property type="project" value="UniProtKB-UniRule"/>
</dbReference>
<dbReference type="GO" id="GO:0009853">
    <property type="term" value="P:photorespiration"/>
    <property type="evidence" value="ECO:0007669"/>
    <property type="project" value="UniProtKB-KW"/>
</dbReference>
<dbReference type="GO" id="GO:0019253">
    <property type="term" value="P:reductive pentose-phosphate cycle"/>
    <property type="evidence" value="ECO:0007669"/>
    <property type="project" value="UniProtKB-UniRule"/>
</dbReference>
<dbReference type="CDD" id="cd08212">
    <property type="entry name" value="RuBisCO_large_I"/>
    <property type="match status" value="1"/>
</dbReference>
<dbReference type="FunFam" id="3.20.20.110:FF:000001">
    <property type="entry name" value="Ribulose bisphosphate carboxylase large chain"/>
    <property type="match status" value="1"/>
</dbReference>
<dbReference type="Gene3D" id="3.20.20.110">
    <property type="entry name" value="Ribulose bisphosphate carboxylase, large subunit, C-terminal domain"/>
    <property type="match status" value="1"/>
</dbReference>
<dbReference type="Gene3D" id="3.30.70.150">
    <property type="entry name" value="RuBisCO large subunit, N-terminal domain"/>
    <property type="match status" value="1"/>
</dbReference>
<dbReference type="HAMAP" id="MF_01338">
    <property type="entry name" value="RuBisCO_L_type1"/>
    <property type="match status" value="1"/>
</dbReference>
<dbReference type="InterPro" id="IPR033966">
    <property type="entry name" value="RuBisCO"/>
</dbReference>
<dbReference type="InterPro" id="IPR020878">
    <property type="entry name" value="RuBisCo_large_chain_AS"/>
</dbReference>
<dbReference type="InterPro" id="IPR000685">
    <property type="entry name" value="RuBisCO_lsu_C"/>
</dbReference>
<dbReference type="InterPro" id="IPR036376">
    <property type="entry name" value="RuBisCO_lsu_C_sf"/>
</dbReference>
<dbReference type="InterPro" id="IPR017443">
    <property type="entry name" value="RuBisCO_lsu_fd_N"/>
</dbReference>
<dbReference type="InterPro" id="IPR036422">
    <property type="entry name" value="RuBisCO_lsu_N_sf"/>
</dbReference>
<dbReference type="InterPro" id="IPR020888">
    <property type="entry name" value="RuBisCO_lsuI"/>
</dbReference>
<dbReference type="NCBIfam" id="NF003252">
    <property type="entry name" value="PRK04208.1"/>
    <property type="match status" value="1"/>
</dbReference>
<dbReference type="PANTHER" id="PTHR42704">
    <property type="entry name" value="RIBULOSE BISPHOSPHATE CARBOXYLASE"/>
    <property type="match status" value="1"/>
</dbReference>
<dbReference type="PANTHER" id="PTHR42704:SF16">
    <property type="entry name" value="RIBULOSE BISPHOSPHATE CARBOXYLASE LARGE CHAIN"/>
    <property type="match status" value="1"/>
</dbReference>
<dbReference type="Pfam" id="PF00016">
    <property type="entry name" value="RuBisCO_large"/>
    <property type="match status" value="1"/>
</dbReference>
<dbReference type="Pfam" id="PF02788">
    <property type="entry name" value="RuBisCO_large_N"/>
    <property type="match status" value="1"/>
</dbReference>
<dbReference type="SFLD" id="SFLDG01052">
    <property type="entry name" value="RuBisCO"/>
    <property type="match status" value="1"/>
</dbReference>
<dbReference type="SFLD" id="SFLDS00014">
    <property type="entry name" value="RuBisCO"/>
    <property type="match status" value="1"/>
</dbReference>
<dbReference type="SFLD" id="SFLDG00301">
    <property type="entry name" value="RuBisCO-like_proteins"/>
    <property type="match status" value="1"/>
</dbReference>
<dbReference type="SUPFAM" id="SSF51649">
    <property type="entry name" value="RuBisCo, C-terminal domain"/>
    <property type="match status" value="1"/>
</dbReference>
<dbReference type="SUPFAM" id="SSF54966">
    <property type="entry name" value="RuBisCO, large subunit, small (N-terminal) domain"/>
    <property type="match status" value="1"/>
</dbReference>
<dbReference type="PROSITE" id="PS00157">
    <property type="entry name" value="RUBISCO_LARGE"/>
    <property type="match status" value="1"/>
</dbReference>
<name>RBL_PLUAU</name>